<reference key="1">
    <citation type="journal article" date="2017" name="Chemistry">
        <title>Mechanistic Characterization of Two Chimeric Sesterterpene Synthases from Penicillium.</title>
        <authorList>
            <person name="Mitsuhashi T."/>
            <person name="Rinkel J."/>
            <person name="Okada M."/>
            <person name="Abe I."/>
            <person name="Dickschat J.S."/>
        </authorList>
    </citation>
    <scope>NUCLEOTIDE SEQUENCE [GENOMIC DNA]</scope>
    <scope>FUNCTION</scope>
    <scope>CATALYTIC ACTIVITY</scope>
    <source>
        <strain>ATCC 22354 / NBRC 6234 / CBS 338.59 / FRR 3454 / IMI 68220</strain>
    </source>
</reference>
<organism>
    <name type="scientific">Penicillium brasilianum</name>
    <dbReference type="NCBI Taxonomy" id="104259"/>
    <lineage>
        <taxon>Eukaryota</taxon>
        <taxon>Fungi</taxon>
        <taxon>Dikarya</taxon>
        <taxon>Ascomycota</taxon>
        <taxon>Pezizomycotina</taxon>
        <taxon>Eurotiomycetes</taxon>
        <taxon>Eurotiomycetidae</taxon>
        <taxon>Eurotiales</taxon>
        <taxon>Aspergillaceae</taxon>
        <taxon>Penicillium</taxon>
    </lineage>
</organism>
<evidence type="ECO:0000250" key="1">
    <source>
        <dbReference type="UniProtKB" id="A2PZA5"/>
    </source>
</evidence>
<evidence type="ECO:0000250" key="2">
    <source>
        <dbReference type="UniProtKB" id="P9WEV6"/>
    </source>
</evidence>
<evidence type="ECO:0000250" key="3">
    <source>
        <dbReference type="UniProtKB" id="P9WEV7"/>
    </source>
</evidence>
<evidence type="ECO:0000250" key="4">
    <source>
        <dbReference type="UniProtKB" id="Q12051"/>
    </source>
</evidence>
<evidence type="ECO:0000250" key="5">
    <source>
        <dbReference type="UniProtKB" id="Q40577"/>
    </source>
</evidence>
<evidence type="ECO:0000256" key="6">
    <source>
        <dbReference type="SAM" id="MobiDB-lite"/>
    </source>
</evidence>
<evidence type="ECO:0000269" key="7">
    <source>
    </source>
</evidence>
<evidence type="ECO:0000303" key="8">
    <source>
    </source>
</evidence>
<evidence type="ECO:0000305" key="9"/>
<evidence type="ECO:0000305" key="10">
    <source>
    </source>
</evidence>
<evidence type="ECO:0007829" key="11">
    <source>
        <dbReference type="PDB" id="8YL9"/>
    </source>
</evidence>
<protein>
    <recommendedName>
        <fullName evidence="8">Sesterbrasiliatriene synthase PbSS</fullName>
    </recommendedName>
    <alternativeName>
        <fullName evidence="8">Bifunctional sesterterpene synthase PbSS</fullName>
        <shortName evidence="8">SS</shortName>
    </alternativeName>
    <domain>
        <recommendedName>
            <fullName evidence="8">Sesterbrasiliatriene cyclase</fullName>
            <ecNumber evidence="7">4.2.3.-</ecNumber>
        </recommendedName>
    </domain>
    <domain>
        <recommendedName>
            <fullName evidence="8">Geranylgeranyl diphosphate synthase</fullName>
            <shortName evidence="8">GGDP synthase</shortName>
            <shortName evidence="8">GGS</shortName>
            <ecNumber evidence="7">2.5.1.29</ecNumber>
        </recommendedName>
    </domain>
    <domain>
        <recommendedName>
            <fullName evidence="8">Geranylfarnesyl diphosphate synthase</fullName>
            <shortName evidence="8">GFDP synthase</shortName>
            <ecNumber evidence="7">2.5.1.81</ecNumber>
        </recommendedName>
    </domain>
</protein>
<accession>A0A2Z6AQX7</accession>
<keyword id="KW-0002">3D-structure</keyword>
<keyword id="KW-0414">Isoprene biosynthesis</keyword>
<keyword id="KW-0456">Lyase</keyword>
<keyword id="KW-0460">Magnesium</keyword>
<keyword id="KW-0479">Metal-binding</keyword>
<keyword id="KW-0511">Multifunctional enzyme</keyword>
<keyword id="KW-0677">Repeat</keyword>
<keyword id="KW-0808">Transferase</keyword>
<dbReference type="EC" id="4.2.3.-" evidence="7"/>
<dbReference type="EC" id="2.5.1.29" evidence="7"/>
<dbReference type="EC" id="2.5.1.81" evidence="7"/>
<dbReference type="EMBL" id="LC228601">
    <property type="protein sequence ID" value="BBD05404.1"/>
    <property type="molecule type" value="Genomic_DNA"/>
</dbReference>
<dbReference type="PDB" id="8YL9">
    <property type="method" value="X-ray"/>
    <property type="resolution" value="2.75 A"/>
    <property type="chains" value="A/B/I=1-352"/>
</dbReference>
<dbReference type="PDBsum" id="8YL9"/>
<dbReference type="SMR" id="A0A2Z6AQX7"/>
<dbReference type="UniPathway" id="UPA00213"/>
<dbReference type="GO" id="GO:0016829">
    <property type="term" value="F:lyase activity"/>
    <property type="evidence" value="ECO:0007669"/>
    <property type="project" value="UniProtKB-KW"/>
</dbReference>
<dbReference type="GO" id="GO:0046872">
    <property type="term" value="F:metal ion binding"/>
    <property type="evidence" value="ECO:0007669"/>
    <property type="project" value="UniProtKB-KW"/>
</dbReference>
<dbReference type="GO" id="GO:0004659">
    <property type="term" value="F:prenyltransferase activity"/>
    <property type="evidence" value="ECO:0007669"/>
    <property type="project" value="InterPro"/>
</dbReference>
<dbReference type="GO" id="GO:0046165">
    <property type="term" value="P:alcohol biosynthetic process"/>
    <property type="evidence" value="ECO:0007669"/>
    <property type="project" value="UniProtKB-ARBA"/>
</dbReference>
<dbReference type="GO" id="GO:0043386">
    <property type="term" value="P:mycotoxin biosynthetic process"/>
    <property type="evidence" value="ECO:0007669"/>
    <property type="project" value="UniProtKB-ARBA"/>
</dbReference>
<dbReference type="GO" id="GO:0016114">
    <property type="term" value="P:terpenoid biosynthetic process"/>
    <property type="evidence" value="ECO:0007669"/>
    <property type="project" value="UniProtKB-UniPathway"/>
</dbReference>
<dbReference type="CDD" id="cd00685">
    <property type="entry name" value="Trans_IPPS_HT"/>
    <property type="match status" value="1"/>
</dbReference>
<dbReference type="Gene3D" id="1.10.600.10">
    <property type="entry name" value="Farnesyl Diphosphate Synthase"/>
    <property type="match status" value="2"/>
</dbReference>
<dbReference type="InterPro" id="IPR008949">
    <property type="entry name" value="Isoprenoid_synthase_dom_sf"/>
</dbReference>
<dbReference type="InterPro" id="IPR000092">
    <property type="entry name" value="Polyprenyl_synt"/>
</dbReference>
<dbReference type="InterPro" id="IPR033749">
    <property type="entry name" value="Polyprenyl_synt_CS"/>
</dbReference>
<dbReference type="PANTHER" id="PTHR12001">
    <property type="entry name" value="GERANYLGERANYL PYROPHOSPHATE SYNTHASE"/>
    <property type="match status" value="1"/>
</dbReference>
<dbReference type="PANTHER" id="PTHR12001:SF44">
    <property type="entry name" value="GERANYLGERANYL PYROPHOSPHATE SYNTHASE"/>
    <property type="match status" value="1"/>
</dbReference>
<dbReference type="Pfam" id="PF00348">
    <property type="entry name" value="polyprenyl_synt"/>
    <property type="match status" value="1"/>
</dbReference>
<dbReference type="Pfam" id="PF19086">
    <property type="entry name" value="Terpene_syn_C_2"/>
    <property type="match status" value="1"/>
</dbReference>
<dbReference type="SFLD" id="SFLDS00005">
    <property type="entry name" value="Isoprenoid_Synthase_Type_I"/>
    <property type="match status" value="1"/>
</dbReference>
<dbReference type="SUPFAM" id="SSF48576">
    <property type="entry name" value="Terpenoid synthases"/>
    <property type="match status" value="2"/>
</dbReference>
<dbReference type="PROSITE" id="PS00723">
    <property type="entry name" value="POLYPRENYL_SYNTHASE_1"/>
    <property type="match status" value="1"/>
</dbReference>
<proteinExistence type="evidence at protein level"/>
<comment type="function">
    <text evidence="7">Bifunctional sesterterpene synthase that possesses both prenyl transferase and terpene cyclase activity, converting isopentenyl diphosphate and dimethylallyl diphosphate into geranylfarnesyl diphosphate (GFPP) and further converting GFPP into sesterbrasiliatriene.</text>
</comment>
<comment type="catalytic activity">
    <reaction evidence="7">
        <text>isopentenyl diphosphate + (2E,6E)-farnesyl diphosphate = (2E,6E,10E)-geranylgeranyl diphosphate + diphosphate</text>
        <dbReference type="Rhea" id="RHEA:17653"/>
        <dbReference type="ChEBI" id="CHEBI:33019"/>
        <dbReference type="ChEBI" id="CHEBI:58756"/>
        <dbReference type="ChEBI" id="CHEBI:128769"/>
        <dbReference type="ChEBI" id="CHEBI:175763"/>
        <dbReference type="EC" id="2.5.1.29"/>
    </reaction>
    <physiologicalReaction direction="left-to-right" evidence="7">
        <dbReference type="Rhea" id="RHEA:17654"/>
    </physiologicalReaction>
</comment>
<comment type="catalytic activity">
    <reaction evidence="7">
        <text>isopentenyl diphosphate + (2E,6E,10E)-geranylgeranyl diphosphate = (2E,6E,10E,14E)-geranylfarnesyl diphosphate + diphosphate</text>
        <dbReference type="Rhea" id="RHEA:25694"/>
        <dbReference type="ChEBI" id="CHEBI:33019"/>
        <dbReference type="ChEBI" id="CHEBI:57907"/>
        <dbReference type="ChEBI" id="CHEBI:58756"/>
        <dbReference type="ChEBI" id="CHEBI:128769"/>
        <dbReference type="EC" id="2.5.1.81"/>
    </reaction>
    <physiologicalReaction direction="left-to-right" evidence="7">
        <dbReference type="Rhea" id="RHEA:25695"/>
    </physiologicalReaction>
</comment>
<comment type="cofactor">
    <cofactor evidence="3">
        <name>Mg(2+)</name>
        <dbReference type="ChEBI" id="CHEBI:18420"/>
    </cofactor>
</comment>
<comment type="pathway">
    <text evidence="7">Secondary metabolite biosynthesis; terpenoid biosynthesis.</text>
</comment>
<comment type="subunit">
    <text evidence="1">Hexamer.</text>
</comment>
<comment type="domain">
    <text evidence="2">The conserved DDXXD motifs as well as the NSE/DTE motif are important for the catalytic activity, presumably through binding to Mg(2+).</text>
</comment>
<comment type="similarity">
    <text evidence="9">In the N-terminal section; belongs to the terpene synthase family.</text>
</comment>
<comment type="similarity">
    <text evidence="9">In the C-terminal section; belongs to the FPP/GGPP synthase family.</text>
</comment>
<gene>
    <name type="primary">PbSS</name>
</gene>
<sequence>MDFLSGAFHYSDSVNPSKYSPRPSDYFGTLPFRTSRFEREAADVTADYLRKWQKAVKADNPERKDLVFHGSTTTLGHFVSWAYPECIPDRVDLCTQICDFGFYWDDVTDSVNVQENAEITQDLALALLSELTLGQRLEPKLEINKIVVQMLWGVLDKDRKSGLEMIKFWKGHLDGQAESAHNNMSFEEYTKHRLSEVGARWAVEVGCWSLGINLSREKKDSVAHFVNKGLLAAALMNDYYSFNKEFDEHQRAGSMDRLQNGLGILMREYGYTETEARSILREEIRKGERAIMDGYIAWRESADSSSESHELNRYIVMIILMIGGITFWSSHASRYHRDDLITTAGDRAMIVGKFQCSMRLLDGYPPPNRWKSATSSNDISGRKRKSWSDSNGVDTHGACYTNGSSNRAKRNGTEAGHKANGHDSMDIYTAPFLKAPSEVCEAPYEYINSLQGKNMRNKFMDALNHWLCVPAPSMQIIKNIVQMLHNSSLMLDDIEDESPLRRGQPVAHTFYGISQTINSANFVYVKSVKETSRLKNPICMEIFTDELSNLHTGQSLDLYWRYHGRCPSINEYIMMVDNKTGGLFRLMLRLMEAESPAASSASLVKLLTLTGRYYQIRDDYLNLTSVEYTSKKGFCEDLDEGKFSLPLLHLLNHTRHPDRITAPLFNRASGARSLAREVKVHIIQAMDEAGTFEYAQGVLKYLHEEIMRTLDEVEADLGRNTEARILLLGLGL</sequence>
<feature type="chain" id="PRO_0000453790" description="Sesterbrasiliatriene synthase PbSS">
    <location>
        <begin position="1"/>
        <end position="732"/>
    </location>
</feature>
<feature type="region of interest" description="Terpene cyclase" evidence="10">
    <location>
        <begin position="1"/>
        <end position="342"/>
    </location>
</feature>
<feature type="region of interest" description="Prenyltransferase" evidence="10">
    <location>
        <begin position="343"/>
        <end position="732"/>
    </location>
</feature>
<feature type="region of interest" description="Disordered" evidence="6">
    <location>
        <begin position="371"/>
        <end position="390"/>
    </location>
</feature>
<feature type="region of interest" description="Disordered" evidence="6">
    <location>
        <begin position="398"/>
        <end position="420"/>
    </location>
</feature>
<feature type="short sequence motif" description="DDXXD 1" evidence="2">
    <location>
        <begin position="105"/>
        <end position="109"/>
    </location>
</feature>
<feature type="short sequence motif" description="NSE/DTE" evidence="2">
    <location>
        <begin position="238"/>
        <end position="246"/>
    </location>
</feature>
<feature type="short sequence motif" description="DDXXD 2" evidence="2">
    <location>
        <begin position="492"/>
        <end position="496"/>
    </location>
</feature>
<feature type="compositionally biased region" description="Basic and acidic residues" evidence="6">
    <location>
        <begin position="411"/>
        <end position="420"/>
    </location>
</feature>
<feature type="binding site" evidence="5">
    <location>
        <position position="105"/>
    </location>
    <ligand>
        <name>Mg(2+)</name>
        <dbReference type="ChEBI" id="CHEBI:18420"/>
        <label>1</label>
    </ligand>
</feature>
<feature type="binding site" evidence="5">
    <location>
        <position position="105"/>
    </location>
    <ligand>
        <name>Mg(2+)</name>
        <dbReference type="ChEBI" id="CHEBI:18420"/>
        <label>2</label>
    </ligand>
</feature>
<feature type="binding site" evidence="1">
    <location>
        <position position="105"/>
    </location>
    <ligand>
        <name>substrate</name>
    </ligand>
</feature>
<feature type="binding site" evidence="5">
    <location>
        <position position="109"/>
    </location>
    <ligand>
        <name>Mg(2+)</name>
        <dbReference type="ChEBI" id="CHEBI:18420"/>
        <label>1</label>
    </ligand>
</feature>
<feature type="binding site" evidence="5">
    <location>
        <position position="109"/>
    </location>
    <ligand>
        <name>Mg(2+)</name>
        <dbReference type="ChEBI" id="CHEBI:18420"/>
        <label>2</label>
    </ligand>
</feature>
<feature type="binding site" evidence="1">
    <location>
        <position position="109"/>
    </location>
    <ligand>
        <name>substrate</name>
    </ligand>
</feature>
<feature type="binding site" evidence="1">
    <location>
        <begin position="193"/>
        <end position="196"/>
    </location>
    <ligand>
        <name>substrate</name>
    </ligand>
</feature>
<feature type="binding site" evidence="1">
    <location>
        <begin position="242"/>
        <end position="246"/>
    </location>
    <ligand>
        <name>substrate</name>
    </ligand>
</feature>
<feature type="binding site" evidence="1">
    <location>
        <begin position="334"/>
        <end position="335"/>
    </location>
    <ligand>
        <name>substrate</name>
    </ligand>
</feature>
<feature type="binding site" evidence="4">
    <location>
        <position position="453"/>
    </location>
    <ligand>
        <name>isopentenyl diphosphate</name>
        <dbReference type="ChEBI" id="CHEBI:128769"/>
    </ligand>
</feature>
<feature type="binding site" evidence="4">
    <location>
        <position position="456"/>
    </location>
    <ligand>
        <name>isopentenyl diphosphate</name>
        <dbReference type="ChEBI" id="CHEBI:128769"/>
    </ligand>
</feature>
<feature type="binding site" evidence="4">
    <location>
        <position position="485"/>
    </location>
    <ligand>
        <name>isopentenyl diphosphate</name>
        <dbReference type="ChEBI" id="CHEBI:128769"/>
    </ligand>
</feature>
<feature type="binding site" evidence="4">
    <location>
        <position position="492"/>
    </location>
    <ligand>
        <name>Mg(2+)</name>
        <dbReference type="ChEBI" id="CHEBI:18420"/>
        <label>3</label>
    </ligand>
</feature>
<feature type="binding site" evidence="4">
    <location>
        <position position="492"/>
    </location>
    <ligand>
        <name>Mg(2+)</name>
        <dbReference type="ChEBI" id="CHEBI:18420"/>
        <label>4</label>
    </ligand>
</feature>
<feature type="binding site" evidence="4">
    <location>
        <position position="496"/>
    </location>
    <ligand>
        <name>Mg(2+)</name>
        <dbReference type="ChEBI" id="CHEBI:18420"/>
        <label>3</label>
    </ligand>
</feature>
<feature type="binding site" evidence="4">
    <location>
        <position position="496"/>
    </location>
    <ligand>
        <name>Mg(2+)</name>
        <dbReference type="ChEBI" id="CHEBI:18420"/>
        <label>4</label>
    </ligand>
</feature>
<feature type="binding site" evidence="4">
    <location>
        <position position="501"/>
    </location>
    <ligand>
        <name>dimethylallyl diphosphate</name>
        <dbReference type="ChEBI" id="CHEBI:57623"/>
    </ligand>
</feature>
<feature type="binding site" evidence="4">
    <location>
        <position position="502"/>
    </location>
    <ligand>
        <name>isopentenyl diphosphate</name>
        <dbReference type="ChEBI" id="CHEBI:128769"/>
    </ligand>
</feature>
<feature type="binding site" evidence="4">
    <location>
        <position position="579"/>
    </location>
    <ligand>
        <name>dimethylallyl diphosphate</name>
        <dbReference type="ChEBI" id="CHEBI:57623"/>
    </ligand>
</feature>
<feature type="binding site" evidence="4">
    <location>
        <position position="580"/>
    </location>
    <ligand>
        <name>dimethylallyl diphosphate</name>
        <dbReference type="ChEBI" id="CHEBI:57623"/>
    </ligand>
</feature>
<feature type="binding site" evidence="4">
    <location>
        <position position="615"/>
    </location>
    <ligand>
        <name>dimethylallyl diphosphate</name>
        <dbReference type="ChEBI" id="CHEBI:57623"/>
    </ligand>
</feature>
<feature type="binding site" evidence="4">
    <location>
        <position position="622"/>
    </location>
    <ligand>
        <name>dimethylallyl diphosphate</name>
        <dbReference type="ChEBI" id="CHEBI:57623"/>
    </ligand>
</feature>
<feature type="binding site" evidence="4">
    <location>
        <position position="632"/>
    </location>
    <ligand>
        <name>dimethylallyl diphosphate</name>
        <dbReference type="ChEBI" id="CHEBI:57623"/>
    </ligand>
</feature>
<feature type="binding site" evidence="4">
    <location>
        <position position="642"/>
    </location>
    <ligand>
        <name>dimethylallyl diphosphate</name>
        <dbReference type="ChEBI" id="CHEBI:57623"/>
    </ligand>
</feature>
<feature type="strand" evidence="11">
    <location>
        <begin position="9"/>
        <end position="13"/>
    </location>
</feature>
<feature type="strand" evidence="11">
    <location>
        <begin position="16"/>
        <end position="18"/>
    </location>
</feature>
<feature type="strand" evidence="11">
    <location>
        <begin position="33"/>
        <end position="35"/>
    </location>
</feature>
<feature type="helix" evidence="11">
    <location>
        <begin position="38"/>
        <end position="59"/>
    </location>
</feature>
<feature type="helix" evidence="11">
    <location>
        <begin position="78"/>
        <end position="82"/>
    </location>
</feature>
<feature type="helix" evidence="11">
    <location>
        <begin position="91"/>
        <end position="108"/>
    </location>
</feature>
<feature type="strand" evidence="11">
    <location>
        <begin position="109"/>
        <end position="111"/>
    </location>
</feature>
<feature type="helix" evidence="11">
    <location>
        <begin position="113"/>
        <end position="130"/>
    </location>
</feature>
<feature type="helix" evidence="11">
    <location>
        <begin position="142"/>
        <end position="145"/>
    </location>
</feature>
<feature type="helix" evidence="11">
    <location>
        <begin position="147"/>
        <end position="157"/>
    </location>
</feature>
<feature type="helix" evidence="11">
    <location>
        <begin position="159"/>
        <end position="175"/>
    </location>
</feature>
<feature type="helix" evidence="11">
    <location>
        <begin position="186"/>
        <end position="196"/>
    </location>
</feature>
<feature type="helix" evidence="11">
    <location>
        <begin position="199"/>
        <end position="210"/>
    </location>
</feature>
<feature type="helix" evidence="11">
    <location>
        <begin position="216"/>
        <end position="221"/>
    </location>
</feature>
<feature type="helix" evidence="11">
    <location>
        <begin position="223"/>
        <end position="250"/>
    </location>
</feature>
<feature type="helix" evidence="11">
    <location>
        <begin position="261"/>
        <end position="268"/>
    </location>
</feature>
<feature type="helix" evidence="11">
    <location>
        <begin position="273"/>
        <end position="301"/>
    </location>
</feature>
<feature type="helix" evidence="11">
    <location>
        <begin position="306"/>
        <end position="329"/>
    </location>
</feature>
<feature type="helix" evidence="11">
    <location>
        <begin position="333"/>
        <end position="336"/>
    </location>
</feature>
<feature type="helix" evidence="11">
    <location>
        <begin position="346"/>
        <end position="348"/>
    </location>
</feature>
<name>PBSS_PENBI</name>